<accession>B7NR37</accession>
<proteinExistence type="inferred from homology"/>
<dbReference type="EMBL" id="CU928164">
    <property type="protein sequence ID" value="CAR20445.1"/>
    <property type="molecule type" value="Genomic_DNA"/>
</dbReference>
<dbReference type="RefSeq" id="WP_001288587.1">
    <property type="nucleotide sequence ID" value="NC_011750.1"/>
</dbReference>
<dbReference type="RefSeq" id="YP_002410214.1">
    <property type="nucleotide sequence ID" value="NC_011750.1"/>
</dbReference>
<dbReference type="SMR" id="B7NR37"/>
<dbReference type="STRING" id="585057.ECIAI39_4339"/>
<dbReference type="GeneID" id="93778232"/>
<dbReference type="KEGG" id="ect:ECIAI39_4339"/>
<dbReference type="PATRIC" id="fig|585057.6.peg.4484"/>
<dbReference type="HOGENOM" id="CLU_085114_3_0_6"/>
<dbReference type="Proteomes" id="UP000000749">
    <property type="component" value="Chromosome"/>
</dbReference>
<dbReference type="GO" id="GO:0005886">
    <property type="term" value="C:plasma membrane"/>
    <property type="evidence" value="ECO:0007669"/>
    <property type="project" value="UniProtKB-SubCell"/>
</dbReference>
<dbReference type="GO" id="GO:0045259">
    <property type="term" value="C:proton-transporting ATP synthase complex"/>
    <property type="evidence" value="ECO:0007669"/>
    <property type="project" value="UniProtKB-KW"/>
</dbReference>
<dbReference type="GO" id="GO:0046933">
    <property type="term" value="F:proton-transporting ATP synthase activity, rotational mechanism"/>
    <property type="evidence" value="ECO:0007669"/>
    <property type="project" value="UniProtKB-UniRule"/>
</dbReference>
<dbReference type="FunFam" id="1.10.520.20:FF:000001">
    <property type="entry name" value="ATP synthase subunit delta"/>
    <property type="match status" value="1"/>
</dbReference>
<dbReference type="Gene3D" id="1.10.520.20">
    <property type="entry name" value="N-terminal domain of the delta subunit of the F1F0-ATP synthase"/>
    <property type="match status" value="1"/>
</dbReference>
<dbReference type="HAMAP" id="MF_01416">
    <property type="entry name" value="ATP_synth_delta_bact"/>
    <property type="match status" value="1"/>
</dbReference>
<dbReference type="InterPro" id="IPR026015">
    <property type="entry name" value="ATP_synth_OSCP/delta_N_sf"/>
</dbReference>
<dbReference type="InterPro" id="IPR020781">
    <property type="entry name" value="ATPase_OSCP/d_CS"/>
</dbReference>
<dbReference type="InterPro" id="IPR000711">
    <property type="entry name" value="ATPase_OSCP/dsu"/>
</dbReference>
<dbReference type="NCBIfam" id="TIGR01145">
    <property type="entry name" value="ATP_synt_delta"/>
    <property type="match status" value="1"/>
</dbReference>
<dbReference type="NCBIfam" id="NF004402">
    <property type="entry name" value="PRK05758.2-2"/>
    <property type="match status" value="1"/>
</dbReference>
<dbReference type="NCBIfam" id="NF004404">
    <property type="entry name" value="PRK05758.2-5"/>
    <property type="match status" value="1"/>
</dbReference>
<dbReference type="PANTHER" id="PTHR11910">
    <property type="entry name" value="ATP SYNTHASE DELTA CHAIN"/>
    <property type="match status" value="1"/>
</dbReference>
<dbReference type="Pfam" id="PF00213">
    <property type="entry name" value="OSCP"/>
    <property type="match status" value="1"/>
</dbReference>
<dbReference type="PRINTS" id="PR00125">
    <property type="entry name" value="ATPASEDELTA"/>
</dbReference>
<dbReference type="SUPFAM" id="SSF47928">
    <property type="entry name" value="N-terminal domain of the delta subunit of the F1F0-ATP synthase"/>
    <property type="match status" value="1"/>
</dbReference>
<dbReference type="PROSITE" id="PS00389">
    <property type="entry name" value="ATPASE_DELTA"/>
    <property type="match status" value="1"/>
</dbReference>
<reference key="1">
    <citation type="journal article" date="2009" name="PLoS Genet.">
        <title>Organised genome dynamics in the Escherichia coli species results in highly diverse adaptive paths.</title>
        <authorList>
            <person name="Touchon M."/>
            <person name="Hoede C."/>
            <person name="Tenaillon O."/>
            <person name="Barbe V."/>
            <person name="Baeriswyl S."/>
            <person name="Bidet P."/>
            <person name="Bingen E."/>
            <person name="Bonacorsi S."/>
            <person name="Bouchier C."/>
            <person name="Bouvet O."/>
            <person name="Calteau A."/>
            <person name="Chiapello H."/>
            <person name="Clermont O."/>
            <person name="Cruveiller S."/>
            <person name="Danchin A."/>
            <person name="Diard M."/>
            <person name="Dossat C."/>
            <person name="Karoui M.E."/>
            <person name="Frapy E."/>
            <person name="Garry L."/>
            <person name="Ghigo J.M."/>
            <person name="Gilles A.M."/>
            <person name="Johnson J."/>
            <person name="Le Bouguenec C."/>
            <person name="Lescat M."/>
            <person name="Mangenot S."/>
            <person name="Martinez-Jehanne V."/>
            <person name="Matic I."/>
            <person name="Nassif X."/>
            <person name="Oztas S."/>
            <person name="Petit M.A."/>
            <person name="Pichon C."/>
            <person name="Rouy Z."/>
            <person name="Ruf C.S."/>
            <person name="Schneider D."/>
            <person name="Tourret J."/>
            <person name="Vacherie B."/>
            <person name="Vallenet D."/>
            <person name="Medigue C."/>
            <person name="Rocha E.P.C."/>
            <person name="Denamur E."/>
        </authorList>
    </citation>
    <scope>NUCLEOTIDE SEQUENCE [LARGE SCALE GENOMIC DNA]</scope>
    <source>
        <strain>IAI39 / ExPEC</strain>
    </source>
</reference>
<protein>
    <recommendedName>
        <fullName evidence="1">ATP synthase subunit delta</fullName>
    </recommendedName>
    <alternativeName>
        <fullName evidence="1">ATP synthase F(1) sector subunit delta</fullName>
    </alternativeName>
    <alternativeName>
        <fullName evidence="1">F-type ATPase subunit delta</fullName>
        <shortName evidence="1">F-ATPase subunit delta</shortName>
    </alternativeName>
</protein>
<name>ATPD_ECO7I</name>
<comment type="function">
    <text evidence="1">F(1)F(0) ATP synthase produces ATP from ADP in the presence of a proton or sodium gradient. F-type ATPases consist of two structural domains, F(1) containing the extramembraneous catalytic core and F(0) containing the membrane proton channel, linked together by a central stalk and a peripheral stalk. During catalysis, ATP synthesis in the catalytic domain of F(1) is coupled via a rotary mechanism of the central stalk subunits to proton translocation.</text>
</comment>
<comment type="function">
    <text evidence="1">This protein is part of the stalk that links CF(0) to CF(1). It either transmits conformational changes from CF(0) to CF(1) or is implicated in proton conduction.</text>
</comment>
<comment type="subunit">
    <text evidence="1">F-type ATPases have 2 components, F(1) - the catalytic core - and F(0) - the membrane proton channel. F(1) has five subunits: alpha(3), beta(3), gamma(1), delta(1), epsilon(1). F(0) has three main subunits: a(1), b(2) and c(10-14). The alpha and beta chains form an alternating ring which encloses part of the gamma chain. F(1) is attached to F(0) by a central stalk formed by the gamma and epsilon chains, while a peripheral stalk is formed by the delta and b chains.</text>
</comment>
<comment type="subcellular location">
    <subcellularLocation>
        <location evidence="1">Cell inner membrane</location>
        <topology evidence="1">Peripheral membrane protein</topology>
    </subcellularLocation>
</comment>
<comment type="similarity">
    <text evidence="1">Belongs to the ATPase delta chain family.</text>
</comment>
<evidence type="ECO:0000255" key="1">
    <source>
        <dbReference type="HAMAP-Rule" id="MF_01416"/>
    </source>
</evidence>
<organism>
    <name type="scientific">Escherichia coli O7:K1 (strain IAI39 / ExPEC)</name>
    <dbReference type="NCBI Taxonomy" id="585057"/>
    <lineage>
        <taxon>Bacteria</taxon>
        <taxon>Pseudomonadati</taxon>
        <taxon>Pseudomonadota</taxon>
        <taxon>Gammaproteobacteria</taxon>
        <taxon>Enterobacterales</taxon>
        <taxon>Enterobacteriaceae</taxon>
        <taxon>Escherichia</taxon>
    </lineage>
</organism>
<keyword id="KW-0066">ATP synthesis</keyword>
<keyword id="KW-0997">Cell inner membrane</keyword>
<keyword id="KW-1003">Cell membrane</keyword>
<keyword id="KW-0139">CF(1)</keyword>
<keyword id="KW-0375">Hydrogen ion transport</keyword>
<keyword id="KW-0406">Ion transport</keyword>
<keyword id="KW-0472">Membrane</keyword>
<keyword id="KW-0813">Transport</keyword>
<feature type="chain" id="PRO_1000184699" description="ATP synthase subunit delta">
    <location>
        <begin position="1"/>
        <end position="177"/>
    </location>
</feature>
<sequence length="177" mass="19332">MSEFITVARPYAKAAFDFAVEHQSVERWQDMLAFAAEVTKNEQMAELLSGALAPETLAESFIAVCGEQLDENGQNLIRVMAENGRLNALPDVLEQFIHLRAVSEATAEVDVISAAALSEQQLAKISAAMEKRLSRKVKLNCKIDKSVMAGVIIRAGDMVIDGSVRGRLERLADVLQS</sequence>
<gene>
    <name evidence="1" type="primary">atpH</name>
    <name type="ordered locus">ECIAI39_4339</name>
</gene>